<proteinExistence type="inferred from homology"/>
<feature type="chain" id="PRO_0000378209" description="Putative cysteine ligase BshC">
    <location>
        <begin position="1"/>
        <end position="538"/>
    </location>
</feature>
<feature type="coiled-coil region" evidence="1">
    <location>
        <begin position="460"/>
        <end position="484"/>
    </location>
</feature>
<name>BSHC_BACC0</name>
<organism>
    <name type="scientific">Bacillus cereus (strain AH820)</name>
    <dbReference type="NCBI Taxonomy" id="405535"/>
    <lineage>
        <taxon>Bacteria</taxon>
        <taxon>Bacillati</taxon>
        <taxon>Bacillota</taxon>
        <taxon>Bacilli</taxon>
        <taxon>Bacillales</taxon>
        <taxon>Bacillaceae</taxon>
        <taxon>Bacillus</taxon>
        <taxon>Bacillus cereus group</taxon>
    </lineage>
</organism>
<accession>B7JK07</accession>
<sequence length="538" mass="62974">MEIKEISVPQQGVVADYMNGKKEIQSCFDYMLTEDAFKQRVQDLREREFFRQDLVTHLLEYNTKLQAGEATIQNVKALGDENTYVVIAGQQAGLLTGPLYTIHKIISVLQLAKEKEESLGVKVVPVFWIAGEDHDMDEINHTFVTKNKKIKKTIFHDRNPKKASASESELSLEDCRKWIEEIFKTYPETNFTKDVLQFVDDSLRKSNTYVDFFGHLIMKMFVNSGLILVDSHHPELRKLEVPFFKQIVSKYKEVQEGLHNQQEVIKELGYKPIIETKSNVVHIFMEIDNERVLLEDNQGKFVGKDGTYSFSYEELIEEMERSPERFSNNVVTRPLMQEYVFPTLAFIGGPGELAYWSELQQVFHTIGFRMPPVVPRITITYIERDIATDLHDLQLQERDPFLNNVDKLRENWLSNQIEEPIDDRFVEAKKEIMNIHTSLQQFVKEIDPGLSAFAGKNEFKINEQIELLERMLKRNVEKKHEVELNKFRRIQFALRPLGAPQERVWNVCYYLNQFGLDFVDRVMEKPFSWNGKHHVIKL</sequence>
<dbReference type="EC" id="6.-.-.-" evidence="1"/>
<dbReference type="EMBL" id="CP001283">
    <property type="protein sequence ID" value="ACK90019.1"/>
    <property type="molecule type" value="Genomic_DNA"/>
</dbReference>
<dbReference type="RefSeq" id="WP_000403062.1">
    <property type="nucleotide sequence ID" value="NC_011773.1"/>
</dbReference>
<dbReference type="SMR" id="B7JK07"/>
<dbReference type="KEGG" id="bcu:BCAH820_3934"/>
<dbReference type="HOGENOM" id="CLU_022249_1_0_9"/>
<dbReference type="Proteomes" id="UP000001363">
    <property type="component" value="Chromosome"/>
</dbReference>
<dbReference type="GO" id="GO:0016874">
    <property type="term" value="F:ligase activity"/>
    <property type="evidence" value="ECO:0007669"/>
    <property type="project" value="UniProtKB-UniRule"/>
</dbReference>
<dbReference type="HAMAP" id="MF_01867">
    <property type="entry name" value="BshC"/>
    <property type="match status" value="1"/>
</dbReference>
<dbReference type="InterPro" id="IPR011199">
    <property type="entry name" value="Bacillithiol_biosynth_BshC"/>
</dbReference>
<dbReference type="InterPro" id="IPR055399">
    <property type="entry name" value="CC_BshC"/>
</dbReference>
<dbReference type="InterPro" id="IPR055398">
    <property type="entry name" value="Rossmann-like_BshC"/>
</dbReference>
<dbReference type="NCBIfam" id="TIGR03998">
    <property type="entry name" value="thiol_BshC"/>
    <property type="match status" value="1"/>
</dbReference>
<dbReference type="Pfam" id="PF24850">
    <property type="entry name" value="CC_BshC"/>
    <property type="match status" value="1"/>
</dbReference>
<dbReference type="Pfam" id="PF10079">
    <property type="entry name" value="Rossmann-like_BshC"/>
    <property type="match status" value="1"/>
</dbReference>
<dbReference type="PIRSF" id="PIRSF012535">
    <property type="entry name" value="UCP012535"/>
    <property type="match status" value="1"/>
</dbReference>
<evidence type="ECO:0000255" key="1">
    <source>
        <dbReference type="HAMAP-Rule" id="MF_01867"/>
    </source>
</evidence>
<comment type="function">
    <text evidence="1">Involved in bacillithiol (BSH) biosynthesis. May catalyze the last step of the pathway, the addition of cysteine to glucosamine malate (GlcN-Mal) to generate BSH.</text>
</comment>
<comment type="similarity">
    <text evidence="1">Belongs to the BshC family.</text>
</comment>
<reference key="1">
    <citation type="submission" date="2008-10" db="EMBL/GenBank/DDBJ databases">
        <title>Genome sequence of Bacillus cereus AH820.</title>
        <authorList>
            <person name="Dodson R.J."/>
            <person name="Durkin A.S."/>
            <person name="Rosovitz M.J."/>
            <person name="Rasko D.A."/>
            <person name="Hoffmaster A."/>
            <person name="Ravel J."/>
            <person name="Sutton G."/>
        </authorList>
    </citation>
    <scope>NUCLEOTIDE SEQUENCE [LARGE SCALE GENOMIC DNA]</scope>
    <source>
        <strain>AH820</strain>
    </source>
</reference>
<protein>
    <recommendedName>
        <fullName evidence="1">Putative cysteine ligase BshC</fullName>
        <ecNumber evidence="1">6.-.-.-</ecNumber>
    </recommendedName>
</protein>
<gene>
    <name evidence="1" type="primary">bshC</name>
    <name type="ordered locus">BCAH820_3934</name>
</gene>
<keyword id="KW-0175">Coiled coil</keyword>
<keyword id="KW-0436">Ligase</keyword>